<dbReference type="EMBL" id="CP000813">
    <property type="protein sequence ID" value="ABV60701.1"/>
    <property type="molecule type" value="Genomic_DNA"/>
</dbReference>
<dbReference type="RefSeq" id="WP_012008628.1">
    <property type="nucleotide sequence ID" value="NZ_VEIS01000021.1"/>
</dbReference>
<dbReference type="SMR" id="A8F8Y4"/>
<dbReference type="STRING" id="315750.BPUM_0001"/>
<dbReference type="GeneID" id="92929907"/>
<dbReference type="KEGG" id="bpu:BPUM_0001"/>
<dbReference type="eggNOG" id="COG0593">
    <property type="taxonomic scope" value="Bacteria"/>
</dbReference>
<dbReference type="HOGENOM" id="CLU_026910_3_1_9"/>
<dbReference type="OrthoDB" id="9807019at2"/>
<dbReference type="Proteomes" id="UP000001355">
    <property type="component" value="Chromosome"/>
</dbReference>
<dbReference type="GO" id="GO:0005737">
    <property type="term" value="C:cytoplasm"/>
    <property type="evidence" value="ECO:0007669"/>
    <property type="project" value="UniProtKB-SubCell"/>
</dbReference>
<dbReference type="GO" id="GO:0005886">
    <property type="term" value="C:plasma membrane"/>
    <property type="evidence" value="ECO:0007669"/>
    <property type="project" value="TreeGrafter"/>
</dbReference>
<dbReference type="GO" id="GO:0005524">
    <property type="term" value="F:ATP binding"/>
    <property type="evidence" value="ECO:0007669"/>
    <property type="project" value="UniProtKB-UniRule"/>
</dbReference>
<dbReference type="GO" id="GO:0016887">
    <property type="term" value="F:ATP hydrolysis activity"/>
    <property type="evidence" value="ECO:0007669"/>
    <property type="project" value="InterPro"/>
</dbReference>
<dbReference type="GO" id="GO:0003688">
    <property type="term" value="F:DNA replication origin binding"/>
    <property type="evidence" value="ECO:0007669"/>
    <property type="project" value="UniProtKB-UniRule"/>
</dbReference>
<dbReference type="GO" id="GO:0008289">
    <property type="term" value="F:lipid binding"/>
    <property type="evidence" value="ECO:0007669"/>
    <property type="project" value="UniProtKB-KW"/>
</dbReference>
<dbReference type="GO" id="GO:0006270">
    <property type="term" value="P:DNA replication initiation"/>
    <property type="evidence" value="ECO:0007669"/>
    <property type="project" value="UniProtKB-UniRule"/>
</dbReference>
<dbReference type="GO" id="GO:0006275">
    <property type="term" value="P:regulation of DNA replication"/>
    <property type="evidence" value="ECO:0007669"/>
    <property type="project" value="UniProtKB-UniRule"/>
</dbReference>
<dbReference type="CDD" id="cd00009">
    <property type="entry name" value="AAA"/>
    <property type="match status" value="1"/>
</dbReference>
<dbReference type="CDD" id="cd06571">
    <property type="entry name" value="Bac_DnaA_C"/>
    <property type="match status" value="1"/>
</dbReference>
<dbReference type="FunFam" id="1.10.1750.10:FF:000003">
    <property type="entry name" value="Chromosomal replication initiator protein DnaA"/>
    <property type="match status" value="1"/>
</dbReference>
<dbReference type="FunFam" id="1.10.8.60:FF:000003">
    <property type="entry name" value="Chromosomal replication initiator protein DnaA"/>
    <property type="match status" value="1"/>
</dbReference>
<dbReference type="FunFam" id="3.30.300.180:FF:000002">
    <property type="entry name" value="Chromosomal replication initiator protein DnaA"/>
    <property type="match status" value="1"/>
</dbReference>
<dbReference type="FunFam" id="3.40.50.300:FF:000150">
    <property type="entry name" value="Chromosomal replication initiator protein DnaA"/>
    <property type="match status" value="1"/>
</dbReference>
<dbReference type="Gene3D" id="1.10.1750.10">
    <property type="match status" value="1"/>
</dbReference>
<dbReference type="Gene3D" id="1.10.8.60">
    <property type="match status" value="1"/>
</dbReference>
<dbReference type="Gene3D" id="3.30.300.180">
    <property type="match status" value="1"/>
</dbReference>
<dbReference type="Gene3D" id="3.40.50.300">
    <property type="entry name" value="P-loop containing nucleotide triphosphate hydrolases"/>
    <property type="match status" value="1"/>
</dbReference>
<dbReference type="HAMAP" id="MF_00377">
    <property type="entry name" value="DnaA_bact"/>
    <property type="match status" value="1"/>
</dbReference>
<dbReference type="InterPro" id="IPR003593">
    <property type="entry name" value="AAA+_ATPase"/>
</dbReference>
<dbReference type="InterPro" id="IPR001957">
    <property type="entry name" value="Chromosome_initiator_DnaA"/>
</dbReference>
<dbReference type="InterPro" id="IPR020591">
    <property type="entry name" value="Chromosome_initiator_DnaA-like"/>
</dbReference>
<dbReference type="InterPro" id="IPR018312">
    <property type="entry name" value="Chromosome_initiator_DnaA_CS"/>
</dbReference>
<dbReference type="InterPro" id="IPR013159">
    <property type="entry name" value="DnaA_C"/>
</dbReference>
<dbReference type="InterPro" id="IPR013317">
    <property type="entry name" value="DnaA_dom"/>
</dbReference>
<dbReference type="InterPro" id="IPR024633">
    <property type="entry name" value="DnaA_N_dom"/>
</dbReference>
<dbReference type="InterPro" id="IPR038454">
    <property type="entry name" value="DnaA_N_sf"/>
</dbReference>
<dbReference type="InterPro" id="IPR027417">
    <property type="entry name" value="P-loop_NTPase"/>
</dbReference>
<dbReference type="InterPro" id="IPR010921">
    <property type="entry name" value="Trp_repressor/repl_initiator"/>
</dbReference>
<dbReference type="NCBIfam" id="TIGR00362">
    <property type="entry name" value="DnaA"/>
    <property type="match status" value="1"/>
</dbReference>
<dbReference type="NCBIfam" id="NF010686">
    <property type="entry name" value="PRK14086.1"/>
    <property type="match status" value="1"/>
</dbReference>
<dbReference type="PANTHER" id="PTHR30050">
    <property type="entry name" value="CHROMOSOMAL REPLICATION INITIATOR PROTEIN DNAA"/>
    <property type="match status" value="1"/>
</dbReference>
<dbReference type="PANTHER" id="PTHR30050:SF2">
    <property type="entry name" value="CHROMOSOMAL REPLICATION INITIATOR PROTEIN DNAA"/>
    <property type="match status" value="1"/>
</dbReference>
<dbReference type="Pfam" id="PF00308">
    <property type="entry name" value="Bac_DnaA"/>
    <property type="match status" value="1"/>
</dbReference>
<dbReference type="Pfam" id="PF08299">
    <property type="entry name" value="Bac_DnaA_C"/>
    <property type="match status" value="1"/>
</dbReference>
<dbReference type="Pfam" id="PF11638">
    <property type="entry name" value="DnaA_N"/>
    <property type="match status" value="1"/>
</dbReference>
<dbReference type="PRINTS" id="PR00051">
    <property type="entry name" value="DNAA"/>
</dbReference>
<dbReference type="SMART" id="SM00382">
    <property type="entry name" value="AAA"/>
    <property type="match status" value="1"/>
</dbReference>
<dbReference type="SMART" id="SM00760">
    <property type="entry name" value="Bac_DnaA_C"/>
    <property type="match status" value="1"/>
</dbReference>
<dbReference type="SUPFAM" id="SSF52540">
    <property type="entry name" value="P-loop containing nucleoside triphosphate hydrolases"/>
    <property type="match status" value="1"/>
</dbReference>
<dbReference type="SUPFAM" id="SSF48295">
    <property type="entry name" value="TrpR-like"/>
    <property type="match status" value="1"/>
</dbReference>
<dbReference type="PROSITE" id="PS01008">
    <property type="entry name" value="DNAA"/>
    <property type="match status" value="1"/>
</dbReference>
<organism>
    <name type="scientific">Bacillus pumilus (strain SAFR-032)</name>
    <dbReference type="NCBI Taxonomy" id="315750"/>
    <lineage>
        <taxon>Bacteria</taxon>
        <taxon>Bacillati</taxon>
        <taxon>Bacillota</taxon>
        <taxon>Bacilli</taxon>
        <taxon>Bacillales</taxon>
        <taxon>Bacillaceae</taxon>
        <taxon>Bacillus</taxon>
    </lineage>
</organism>
<keyword id="KW-0067">ATP-binding</keyword>
<keyword id="KW-0963">Cytoplasm</keyword>
<keyword id="KW-0235">DNA replication</keyword>
<keyword id="KW-0238">DNA-binding</keyword>
<keyword id="KW-0446">Lipid-binding</keyword>
<keyword id="KW-0547">Nucleotide-binding</keyword>
<reference key="1">
    <citation type="journal article" date="2007" name="PLoS ONE">
        <title>Paradoxical DNA repair and peroxide resistance gene conservation in Bacillus pumilus SAFR-032.</title>
        <authorList>
            <person name="Gioia J."/>
            <person name="Yerrapragada S."/>
            <person name="Qin X."/>
            <person name="Jiang H."/>
            <person name="Igboeli O.C."/>
            <person name="Muzny D."/>
            <person name="Dugan-Rocha S."/>
            <person name="Ding Y."/>
            <person name="Hawes A."/>
            <person name="Liu W."/>
            <person name="Perez L."/>
            <person name="Kovar C."/>
            <person name="Dinh H."/>
            <person name="Lee S."/>
            <person name="Nazareth L."/>
            <person name="Blyth P."/>
            <person name="Holder M."/>
            <person name="Buhay C."/>
            <person name="Tirumalai M.R."/>
            <person name="Liu Y."/>
            <person name="Dasgupta I."/>
            <person name="Bokhetache L."/>
            <person name="Fujita M."/>
            <person name="Karouia F."/>
            <person name="Eswara Moorthy P."/>
            <person name="Siefert J."/>
            <person name="Uzman A."/>
            <person name="Buzumbo P."/>
            <person name="Verma A."/>
            <person name="Zwiya H."/>
            <person name="McWilliams B.D."/>
            <person name="Olowu A."/>
            <person name="Clinkenbeard K.D."/>
            <person name="Newcombe D."/>
            <person name="Golebiewski L."/>
            <person name="Petrosino J.F."/>
            <person name="Nicholson W.L."/>
            <person name="Fox G.E."/>
            <person name="Venkateswaran K."/>
            <person name="Highlander S.K."/>
            <person name="Weinstock G.M."/>
        </authorList>
    </citation>
    <scope>NUCLEOTIDE SEQUENCE [LARGE SCALE GENOMIC DNA]</scope>
    <source>
        <strain>SAFR-032</strain>
    </source>
</reference>
<protein>
    <recommendedName>
        <fullName evidence="1">Chromosomal replication initiator protein DnaA</fullName>
    </recommendedName>
</protein>
<accession>A8F8Y4</accession>
<feature type="chain" id="PRO_1000060009" description="Chromosomal replication initiator protein DnaA">
    <location>
        <begin position="1"/>
        <end position="446"/>
    </location>
</feature>
<feature type="region of interest" description="Domain I, interacts with DnaA modulators" evidence="1">
    <location>
        <begin position="1"/>
        <end position="72"/>
    </location>
</feature>
<feature type="region of interest" description="Domain II" evidence="1">
    <location>
        <begin position="72"/>
        <end position="109"/>
    </location>
</feature>
<feature type="region of interest" description="Domain III, AAA+ region" evidence="1">
    <location>
        <begin position="110"/>
        <end position="326"/>
    </location>
</feature>
<feature type="region of interest" description="Domain IV, binds dsDNA" evidence="1">
    <location>
        <begin position="327"/>
        <end position="446"/>
    </location>
</feature>
<feature type="binding site" evidence="1">
    <location>
        <position position="154"/>
    </location>
    <ligand>
        <name>ATP</name>
        <dbReference type="ChEBI" id="CHEBI:30616"/>
    </ligand>
</feature>
<feature type="binding site" evidence="1">
    <location>
        <position position="156"/>
    </location>
    <ligand>
        <name>ATP</name>
        <dbReference type="ChEBI" id="CHEBI:30616"/>
    </ligand>
</feature>
<feature type="binding site" evidence="1">
    <location>
        <position position="157"/>
    </location>
    <ligand>
        <name>ATP</name>
        <dbReference type="ChEBI" id="CHEBI:30616"/>
    </ligand>
</feature>
<feature type="binding site" evidence="1">
    <location>
        <position position="158"/>
    </location>
    <ligand>
        <name>ATP</name>
        <dbReference type="ChEBI" id="CHEBI:30616"/>
    </ligand>
</feature>
<comment type="function">
    <text evidence="1">Plays an essential role in the initiation and regulation of chromosomal replication. ATP-DnaA binds to the origin of replication (oriC) to initiate formation of the DNA replication initiation complex once per cell cycle. Binds the DnaA box (a 9 base pair repeat at the origin) and separates the double-stranded (ds)DNA. Forms a right-handed helical filament on oriC DNA; dsDNA binds to the exterior of the filament while single-stranded (ss)DNA is stabiized in the filament's interior. The ATP-DnaA-oriC complex binds and stabilizes one strand of the AT-rich DNA unwinding element (DUE), permitting loading of DNA polymerase. After initiation quickly degrades to an ADP-DnaA complex that is not apt for DNA replication. Binds acidic phospholipids.</text>
</comment>
<comment type="subunit">
    <text evidence="1">Oligomerizes as a right-handed, spiral filament on DNA at oriC.</text>
</comment>
<comment type="subcellular location">
    <subcellularLocation>
        <location evidence="1">Cytoplasm</location>
    </subcellularLocation>
</comment>
<comment type="domain">
    <text evidence="1">Domain I is involved in oligomerization and binding regulators, domain II is flexibile and of varying length in different bacteria, domain III forms the AAA+ region, while domain IV binds dsDNA.</text>
</comment>
<comment type="similarity">
    <text evidence="1">Belongs to the DnaA family.</text>
</comment>
<proteinExistence type="inferred from homology"/>
<evidence type="ECO:0000255" key="1">
    <source>
        <dbReference type="HAMAP-Rule" id="MF_00377"/>
    </source>
</evidence>
<gene>
    <name evidence="1" type="primary">dnaA</name>
    <name type="ordered locus">BPUM_0001</name>
</gene>
<sequence length="446" mass="50968">MENILDLWNKALQKIETKLSKPSFETWMKSTKAHSLQGDTLTITAPNEFARDWLESRYLHLIADTIYELTGEELSIKFIIPQNQDEVEAMPKSPIKKMSKEDPVDIPQNMLNPKYTFDTFVIGSGNRFAHAASLAVAEAPAKAYNPLFIYGGVGLGKTHLMHAIGHYVIDHNPSAKVVYLSSEKFTNEFINSIRDNKAVDFRNRYRNVDVLLIDDIQFLAGKEQTQEEFFHTFNTLHEESKQIVISSDRPPKEIPTLEDRLRSRFEWGLITDITPPDLETRIAILRKKAKAEGLDIPNEVMLYIANQIDSNIRELEGALIRVVAYSSLINKDINADLAAEALKDIIPSSKPRVITIKDIQRIVGQQFNIRLEDFKAKKRTKSVAYPRQIAMYLSREMTDSSLPKIGEEFGGRDHTTVIHAHEKISKLMVEDEQLQQHVKEIKEQLK</sequence>
<name>DNAA_BACP2</name>